<accession>C3LE56</accession>
<gene>
    <name type="ordered locus">BAMEG_3696</name>
</gene>
<reference key="1">
    <citation type="submission" date="2008-10" db="EMBL/GenBank/DDBJ databases">
        <title>Genome sequence of Bacillus anthracis str. CDC 684.</title>
        <authorList>
            <person name="Dodson R.J."/>
            <person name="Munk A.C."/>
            <person name="Brettin T."/>
            <person name="Bruce D."/>
            <person name="Detter C."/>
            <person name="Tapia R."/>
            <person name="Han C."/>
            <person name="Sutton G."/>
            <person name="Sims D."/>
        </authorList>
    </citation>
    <scope>NUCLEOTIDE SEQUENCE [LARGE SCALE GENOMIC DNA]</scope>
    <source>
        <strain>CDC 684 / NRRL 3495</strain>
    </source>
</reference>
<protein>
    <recommendedName>
        <fullName evidence="1">UPF0342 protein BAMEG_3696</fullName>
    </recommendedName>
</protein>
<name>Y3696_BACAC</name>
<feature type="chain" id="PRO_1000185137" description="UPF0342 protein BAMEG_3696">
    <location>
        <begin position="1"/>
        <end position="118"/>
    </location>
</feature>
<comment type="similarity">
    <text evidence="1">Belongs to the UPF0342 family.</text>
</comment>
<dbReference type="EMBL" id="CP001215">
    <property type="protein sequence ID" value="ACP14178.1"/>
    <property type="molecule type" value="Genomic_DNA"/>
</dbReference>
<dbReference type="RefSeq" id="WP_000164607.1">
    <property type="nucleotide sequence ID" value="NC_012581.1"/>
</dbReference>
<dbReference type="SMR" id="C3LE56"/>
<dbReference type="KEGG" id="bah:BAMEG_3696"/>
<dbReference type="HOGENOM" id="CLU_140243_3_0_9"/>
<dbReference type="Gene3D" id="1.20.1500.10">
    <property type="entry name" value="YheA/YmcA-like"/>
    <property type="match status" value="1"/>
</dbReference>
<dbReference type="HAMAP" id="MF_01526">
    <property type="entry name" value="UPF0342"/>
    <property type="match status" value="1"/>
</dbReference>
<dbReference type="InterPro" id="IPR010368">
    <property type="entry name" value="Com_YlbF"/>
</dbReference>
<dbReference type="InterPro" id="IPR023378">
    <property type="entry name" value="YheA/YmcA-like_dom_sf"/>
</dbReference>
<dbReference type="NCBIfam" id="NF010211">
    <property type="entry name" value="PRK13676.1-4"/>
    <property type="match status" value="1"/>
</dbReference>
<dbReference type="Pfam" id="PF06133">
    <property type="entry name" value="Com_YlbF"/>
    <property type="match status" value="1"/>
</dbReference>
<dbReference type="SUPFAM" id="SSF158622">
    <property type="entry name" value="YheA/YmcA-like"/>
    <property type="match status" value="1"/>
</dbReference>
<organism>
    <name type="scientific">Bacillus anthracis (strain CDC 684 / NRRL 3495)</name>
    <dbReference type="NCBI Taxonomy" id="568206"/>
    <lineage>
        <taxon>Bacteria</taxon>
        <taxon>Bacillati</taxon>
        <taxon>Bacillota</taxon>
        <taxon>Bacilli</taxon>
        <taxon>Bacillales</taxon>
        <taxon>Bacillaceae</taxon>
        <taxon>Bacillus</taxon>
        <taxon>Bacillus cereus group</taxon>
    </lineage>
</organism>
<evidence type="ECO:0000255" key="1">
    <source>
        <dbReference type="HAMAP-Rule" id="MF_01526"/>
    </source>
</evidence>
<sequence length="118" mass="13592">MTKNIHDVAYELQKAIAENDDFKTLKESYAAVQADAASKNLFDEFRTMQLSLQQKMMQGQEITEEDNQQAQEVVVRIQQDAKITKLMETEQRLNVVIGDVNKIIMKPLEELYSAQQQV</sequence>
<proteinExistence type="inferred from homology"/>